<feature type="chain" id="PRO_1000199680" description="Ubiquinone biosynthesis O-methyltransferase">
    <location>
        <begin position="1"/>
        <end position="240"/>
    </location>
</feature>
<feature type="binding site" evidence="1">
    <location>
        <position position="44"/>
    </location>
    <ligand>
        <name>S-adenosyl-L-methionine</name>
        <dbReference type="ChEBI" id="CHEBI:59789"/>
    </ligand>
</feature>
<feature type="binding site" evidence="1">
    <location>
        <position position="64"/>
    </location>
    <ligand>
        <name>S-adenosyl-L-methionine</name>
        <dbReference type="ChEBI" id="CHEBI:59789"/>
    </ligand>
</feature>
<feature type="binding site" evidence="1">
    <location>
        <position position="85"/>
    </location>
    <ligand>
        <name>S-adenosyl-L-methionine</name>
        <dbReference type="ChEBI" id="CHEBI:59789"/>
    </ligand>
</feature>
<feature type="binding site" evidence="1">
    <location>
        <position position="129"/>
    </location>
    <ligand>
        <name>S-adenosyl-L-methionine</name>
        <dbReference type="ChEBI" id="CHEBI:59789"/>
    </ligand>
</feature>
<accession>B1LLI3</accession>
<proteinExistence type="inferred from homology"/>
<evidence type="ECO:0000255" key="1">
    <source>
        <dbReference type="HAMAP-Rule" id="MF_00472"/>
    </source>
</evidence>
<reference key="1">
    <citation type="journal article" date="2008" name="J. Bacteriol.">
        <title>Insights into the environmental resistance gene pool from the genome sequence of the multidrug-resistant environmental isolate Escherichia coli SMS-3-5.</title>
        <authorList>
            <person name="Fricke W.F."/>
            <person name="Wright M.S."/>
            <person name="Lindell A.H."/>
            <person name="Harkins D.M."/>
            <person name="Baker-Austin C."/>
            <person name="Ravel J."/>
            <person name="Stepanauskas R."/>
        </authorList>
    </citation>
    <scope>NUCLEOTIDE SEQUENCE [LARGE SCALE GENOMIC DNA]</scope>
    <source>
        <strain>SMS-3-5 / SECEC</strain>
    </source>
</reference>
<comment type="function">
    <text evidence="1">O-methyltransferase that catalyzes the 2 O-methylation steps in the ubiquinone biosynthetic pathway.</text>
</comment>
<comment type="catalytic activity">
    <reaction evidence="1">
        <text>a 3-demethylubiquinol + S-adenosyl-L-methionine = a ubiquinol + S-adenosyl-L-homocysteine + H(+)</text>
        <dbReference type="Rhea" id="RHEA:44380"/>
        <dbReference type="Rhea" id="RHEA-COMP:9566"/>
        <dbReference type="Rhea" id="RHEA-COMP:10914"/>
        <dbReference type="ChEBI" id="CHEBI:15378"/>
        <dbReference type="ChEBI" id="CHEBI:17976"/>
        <dbReference type="ChEBI" id="CHEBI:57856"/>
        <dbReference type="ChEBI" id="CHEBI:59789"/>
        <dbReference type="ChEBI" id="CHEBI:84422"/>
        <dbReference type="EC" id="2.1.1.64"/>
    </reaction>
</comment>
<comment type="catalytic activity">
    <reaction evidence="1">
        <text>a 3-(all-trans-polyprenyl)benzene-1,2-diol + S-adenosyl-L-methionine = a 2-methoxy-6-(all-trans-polyprenyl)phenol + S-adenosyl-L-homocysteine + H(+)</text>
        <dbReference type="Rhea" id="RHEA:31411"/>
        <dbReference type="Rhea" id="RHEA-COMP:9550"/>
        <dbReference type="Rhea" id="RHEA-COMP:9551"/>
        <dbReference type="ChEBI" id="CHEBI:15378"/>
        <dbReference type="ChEBI" id="CHEBI:57856"/>
        <dbReference type="ChEBI" id="CHEBI:59789"/>
        <dbReference type="ChEBI" id="CHEBI:62729"/>
        <dbReference type="ChEBI" id="CHEBI:62731"/>
        <dbReference type="EC" id="2.1.1.222"/>
    </reaction>
</comment>
<comment type="pathway">
    <text evidence="1">Cofactor biosynthesis; ubiquinone biosynthesis.</text>
</comment>
<comment type="similarity">
    <text evidence="1">Belongs to the methyltransferase superfamily. UbiG/COQ3 family.</text>
</comment>
<protein>
    <recommendedName>
        <fullName evidence="1">Ubiquinone biosynthesis O-methyltransferase</fullName>
    </recommendedName>
    <alternativeName>
        <fullName evidence="1">2-octaprenyl-6-hydroxyphenol methylase</fullName>
        <ecNumber evidence="1">2.1.1.222</ecNumber>
    </alternativeName>
    <alternativeName>
        <fullName evidence="1">3-demethylubiquinone-8 3-O-methyltransferase</fullName>
        <ecNumber evidence="1">2.1.1.64</ecNumber>
    </alternativeName>
</protein>
<gene>
    <name evidence="1" type="primary">ubiG</name>
    <name type="ordered locus">EcSMS35_2383</name>
</gene>
<dbReference type="EC" id="2.1.1.222" evidence="1"/>
<dbReference type="EC" id="2.1.1.64" evidence="1"/>
<dbReference type="EMBL" id="CP000970">
    <property type="protein sequence ID" value="ACB16405.1"/>
    <property type="molecule type" value="Genomic_DNA"/>
</dbReference>
<dbReference type="RefSeq" id="WP_001091058.1">
    <property type="nucleotide sequence ID" value="NC_010498.1"/>
</dbReference>
<dbReference type="SMR" id="B1LLI3"/>
<dbReference type="KEGG" id="ecm:EcSMS35_2383"/>
<dbReference type="HOGENOM" id="CLU_042432_5_0_6"/>
<dbReference type="UniPathway" id="UPA00232"/>
<dbReference type="Proteomes" id="UP000007011">
    <property type="component" value="Chromosome"/>
</dbReference>
<dbReference type="GO" id="GO:0102208">
    <property type="term" value="F:2-polyprenyl-6-hydroxyphenol methylase activity"/>
    <property type="evidence" value="ECO:0007669"/>
    <property type="project" value="UniProtKB-EC"/>
</dbReference>
<dbReference type="GO" id="GO:0061542">
    <property type="term" value="F:3-demethylubiquinol 3-O-methyltransferase activity"/>
    <property type="evidence" value="ECO:0007669"/>
    <property type="project" value="UniProtKB-UniRule"/>
</dbReference>
<dbReference type="GO" id="GO:0010420">
    <property type="term" value="F:polyprenyldihydroxybenzoate methyltransferase activity"/>
    <property type="evidence" value="ECO:0007669"/>
    <property type="project" value="InterPro"/>
</dbReference>
<dbReference type="GO" id="GO:0032259">
    <property type="term" value="P:methylation"/>
    <property type="evidence" value="ECO:0007669"/>
    <property type="project" value="UniProtKB-KW"/>
</dbReference>
<dbReference type="CDD" id="cd02440">
    <property type="entry name" value="AdoMet_MTases"/>
    <property type="match status" value="1"/>
</dbReference>
<dbReference type="FunFam" id="3.40.50.150:FF:000028">
    <property type="entry name" value="Ubiquinone biosynthesis O-methyltransferase"/>
    <property type="match status" value="1"/>
</dbReference>
<dbReference type="Gene3D" id="3.40.50.150">
    <property type="entry name" value="Vaccinia Virus protein VP39"/>
    <property type="match status" value="1"/>
</dbReference>
<dbReference type="HAMAP" id="MF_00472">
    <property type="entry name" value="UbiG"/>
    <property type="match status" value="1"/>
</dbReference>
<dbReference type="InterPro" id="IPR029063">
    <property type="entry name" value="SAM-dependent_MTases_sf"/>
</dbReference>
<dbReference type="InterPro" id="IPR010233">
    <property type="entry name" value="UbiG_MeTrfase"/>
</dbReference>
<dbReference type="NCBIfam" id="TIGR01983">
    <property type="entry name" value="UbiG"/>
    <property type="match status" value="1"/>
</dbReference>
<dbReference type="PANTHER" id="PTHR43464">
    <property type="entry name" value="METHYLTRANSFERASE"/>
    <property type="match status" value="1"/>
</dbReference>
<dbReference type="PANTHER" id="PTHR43464:SF19">
    <property type="entry name" value="UBIQUINONE BIOSYNTHESIS O-METHYLTRANSFERASE, MITOCHONDRIAL"/>
    <property type="match status" value="1"/>
</dbReference>
<dbReference type="Pfam" id="PF13489">
    <property type="entry name" value="Methyltransf_23"/>
    <property type="match status" value="1"/>
</dbReference>
<dbReference type="SUPFAM" id="SSF53335">
    <property type="entry name" value="S-adenosyl-L-methionine-dependent methyltransferases"/>
    <property type="match status" value="1"/>
</dbReference>
<sequence length="240" mass="26624">MNTENLLKNNNVDHEEIAKFEAVASRWWDLEGEFKPLHRINPLRLGYIAERAGGLFGKKVLDVGCGGGILAESMAREGATVTGLDMGFEPLQVAKLHALESGIQVDYVQETVEEHAAKHAGQYDVVTCMEMLEHVPDPQSVVRACAQLVKPGGDVFFSTLNRNGKSWLMAVVGAEYILRMVPKGTHDVKKFIKPAELLGWVDQTSLKERHMTGLHYNPITNSFKLGPGVDVNYMLHTQNK</sequence>
<name>UBIG_ECOSM</name>
<organism>
    <name type="scientific">Escherichia coli (strain SMS-3-5 / SECEC)</name>
    <dbReference type="NCBI Taxonomy" id="439855"/>
    <lineage>
        <taxon>Bacteria</taxon>
        <taxon>Pseudomonadati</taxon>
        <taxon>Pseudomonadota</taxon>
        <taxon>Gammaproteobacteria</taxon>
        <taxon>Enterobacterales</taxon>
        <taxon>Enterobacteriaceae</taxon>
        <taxon>Escherichia</taxon>
    </lineage>
</organism>
<keyword id="KW-0489">Methyltransferase</keyword>
<keyword id="KW-0949">S-adenosyl-L-methionine</keyword>
<keyword id="KW-0808">Transferase</keyword>
<keyword id="KW-0831">Ubiquinone biosynthesis</keyword>